<sequence length="522" mass="57223">MSQLGSRGRLWLQSPTGGPPPIFLPSDGQALVLGRGPLTQVTDRKCSRNQVELIADPESRTVAVKQLGVNPSTVGVHELKPGLSGSLSLGDVLYLVNGLYPLTLRWEELSTSGSQPDAPPDTPGDPEEGEDTEPQKKRVRKSSLGWESLKKLLVFTASGVKPQGKVAAFDLDGTLITTRSGKVFPTSPSDWRILYPEIPKKLQELAAEGYKLVIFTNQMGIGRGKLPAEVFKGKVEAVLEKLGVPFQVLVATHAGLNRKPVSGMWDHLQEQANEGIPISVEDSVFVGDAAGRLANWAPGRKKKDFSCADRLFALNVGLPFATPEEFFLKWPAARFELPAFDPRTISSAGPLYLPESSSLLSPNPEVVVAVGFPGAGKSTFIQEHLVSAGYVHVNRDTLGSWQRCVSSCQAALRQGKRVVIDNTNPDVPSRARYIQCAKDAGVPCRCFNFCATIEQARHNNRFREMTDPSHAPVSDMVMFSYRKQFEPPTLAEGFLEILEIPFRLQEHLDPALQRLYRQFSEG</sequence>
<feature type="chain" id="PRO_0000058479" description="Bifunctional polynucleotide phosphatase/kinase">
    <location>
        <begin position="1"/>
        <end position="522"/>
    </location>
</feature>
<feature type="domain" description="FHA">
    <location>
        <begin position="6"/>
        <end position="110"/>
    </location>
</feature>
<feature type="region of interest" description="Disordered" evidence="3">
    <location>
        <begin position="110"/>
        <end position="142"/>
    </location>
</feature>
<feature type="region of interest" description="Phosphatase" evidence="5">
    <location>
        <begin position="145"/>
        <end position="336"/>
    </location>
</feature>
<feature type="region of interest" description="Kinase" evidence="5">
    <location>
        <begin position="340"/>
        <end position="517"/>
    </location>
</feature>
<feature type="binding site" evidence="2">
    <location>
        <begin position="371"/>
        <end position="378"/>
    </location>
    <ligand>
        <name>ATP</name>
        <dbReference type="ChEBI" id="CHEBI:30616"/>
    </ligand>
</feature>
<feature type="modified residue" description="N-acetylmethionine" evidence="1">
    <location>
        <position position="1"/>
    </location>
</feature>
<feature type="modified residue" description="Phosphoserine" evidence="1">
    <location>
        <position position="114"/>
    </location>
</feature>
<feature type="modified residue" description="Phosphothreonine" evidence="8">
    <location>
        <position position="122"/>
    </location>
</feature>
<feature type="splice variant" id="VSP_010771" description="In isoform 2." evidence="6">
    <original>QGKVAAFDLDGTLITTRSGKVFPTSPSDW</original>
    <variation>RA</variation>
    <location>
        <begin position="163"/>
        <end position="191"/>
    </location>
</feature>
<feature type="mutagenesis site" description="Abrogates phosphopeptide recognition." evidence="4">
    <original>R</original>
    <variation>A</variation>
    <location>
        <position position="44"/>
    </location>
</feature>
<feature type="mutagenesis site" description="No effect on phosphopeptide recognition." evidence="4">
    <original>K</original>
    <variation>N</variation>
    <location>
        <position position="45"/>
    </location>
</feature>
<feature type="mutagenesis site" description="Abrogates phosphopeptide recognition." evidence="4">
    <original>R</original>
    <variation>A</variation>
    <location>
        <position position="48"/>
    </location>
</feature>
<feature type="sequence conflict" description="In Ref. 1; AAF36487." evidence="7" ref="1">
    <original>H</original>
    <variation>Q</variation>
    <location>
        <position position="77"/>
    </location>
</feature>
<feature type="sequence conflict" description="In Ref. 1; AAF36487." evidence="7" ref="1">
    <location>
        <position position="216"/>
    </location>
</feature>
<feature type="strand" evidence="11">
    <location>
        <begin position="6"/>
        <end position="13"/>
    </location>
</feature>
<feature type="strand" evidence="9">
    <location>
        <begin position="16"/>
        <end position="18"/>
    </location>
</feature>
<feature type="turn" evidence="10">
    <location>
        <begin position="26"/>
        <end position="28"/>
    </location>
</feature>
<feature type="strand" evidence="11">
    <location>
        <begin position="31"/>
        <end position="36"/>
    </location>
</feature>
<feature type="turn" evidence="11">
    <location>
        <begin position="37"/>
        <end position="40"/>
    </location>
</feature>
<feature type="strand" evidence="10">
    <location>
        <begin position="44"/>
        <end position="46"/>
    </location>
</feature>
<feature type="strand" evidence="11">
    <location>
        <begin position="51"/>
        <end position="56"/>
    </location>
</feature>
<feature type="turn" evidence="11">
    <location>
        <begin position="57"/>
        <end position="60"/>
    </location>
</feature>
<feature type="strand" evidence="11">
    <location>
        <begin position="61"/>
        <end position="66"/>
    </location>
</feature>
<feature type="strand" evidence="11">
    <location>
        <begin position="68"/>
        <end position="70"/>
    </location>
</feature>
<feature type="strand" evidence="9">
    <location>
        <begin position="73"/>
        <end position="78"/>
    </location>
</feature>
<feature type="strand" evidence="11">
    <location>
        <begin position="84"/>
        <end position="88"/>
    </location>
</feature>
<feature type="strand" evidence="11">
    <location>
        <begin position="92"/>
        <end position="96"/>
    </location>
</feature>
<feature type="strand" evidence="11">
    <location>
        <begin position="99"/>
        <end position="108"/>
    </location>
</feature>
<feature type="strand" evidence="13">
    <location>
        <begin position="145"/>
        <end position="149"/>
    </location>
</feature>
<feature type="strand" evidence="13">
    <location>
        <begin position="152"/>
        <end position="156"/>
    </location>
</feature>
<feature type="strand" evidence="13">
    <location>
        <begin position="164"/>
        <end position="169"/>
    </location>
</feature>
<feature type="turn" evidence="13">
    <location>
        <begin position="172"/>
        <end position="174"/>
    </location>
</feature>
<feature type="strand" evidence="13">
    <location>
        <begin position="175"/>
        <end position="177"/>
    </location>
</feature>
<feature type="strand" evidence="10">
    <location>
        <begin position="179"/>
        <end position="181"/>
    </location>
</feature>
<feature type="strand" evidence="13">
    <location>
        <begin position="182"/>
        <end position="184"/>
    </location>
</feature>
<feature type="strand" evidence="13">
    <location>
        <begin position="192"/>
        <end position="194"/>
    </location>
</feature>
<feature type="helix" evidence="13">
    <location>
        <begin position="198"/>
        <end position="207"/>
    </location>
</feature>
<feature type="strand" evidence="13">
    <location>
        <begin position="211"/>
        <end position="217"/>
    </location>
</feature>
<feature type="helix" evidence="13">
    <location>
        <begin position="219"/>
        <end position="222"/>
    </location>
</feature>
<feature type="helix" evidence="13">
    <location>
        <begin position="228"/>
        <end position="242"/>
    </location>
</feature>
<feature type="strand" evidence="13">
    <location>
        <begin position="247"/>
        <end position="251"/>
    </location>
</feature>
<feature type="strand" evidence="13">
    <location>
        <begin position="253"/>
        <end position="255"/>
    </location>
</feature>
<feature type="helix" evidence="13">
    <location>
        <begin position="263"/>
        <end position="271"/>
    </location>
</feature>
<feature type="strand" evidence="14">
    <location>
        <begin position="273"/>
        <end position="275"/>
    </location>
</feature>
<feature type="helix" evidence="13">
    <location>
        <begin position="280"/>
        <end position="282"/>
    </location>
</feature>
<feature type="strand" evidence="13">
    <location>
        <begin position="284"/>
        <end position="286"/>
    </location>
</feature>
<feature type="strand" evidence="14">
    <location>
        <begin position="297"/>
        <end position="299"/>
    </location>
</feature>
<feature type="helix" evidence="13">
    <location>
        <begin position="308"/>
        <end position="316"/>
    </location>
</feature>
<feature type="helix" evidence="13">
    <location>
        <begin position="323"/>
        <end position="327"/>
    </location>
</feature>
<feature type="helix" evidence="13">
    <location>
        <begin position="342"/>
        <end position="344"/>
    </location>
</feature>
<feature type="strand" evidence="13">
    <location>
        <begin position="351"/>
        <end position="354"/>
    </location>
</feature>
<feature type="strand" evidence="13">
    <location>
        <begin position="366"/>
        <end position="371"/>
    </location>
</feature>
<feature type="helix" evidence="13">
    <location>
        <begin position="377"/>
        <end position="384"/>
    </location>
</feature>
<feature type="helix" evidence="13">
    <location>
        <begin position="386"/>
        <end position="388"/>
    </location>
</feature>
<feature type="strand" evidence="12">
    <location>
        <begin position="391"/>
        <end position="393"/>
    </location>
</feature>
<feature type="helix" evidence="13">
    <location>
        <begin position="395"/>
        <end position="397"/>
    </location>
</feature>
<feature type="helix" evidence="13">
    <location>
        <begin position="401"/>
        <end position="413"/>
    </location>
</feature>
<feature type="strand" evidence="13">
    <location>
        <begin position="418"/>
        <end position="422"/>
    </location>
</feature>
<feature type="helix" evidence="13">
    <location>
        <begin position="427"/>
        <end position="440"/>
    </location>
</feature>
<feature type="strand" evidence="13">
    <location>
        <begin position="444"/>
        <end position="449"/>
    </location>
</feature>
<feature type="helix" evidence="13">
    <location>
        <begin position="453"/>
        <end position="466"/>
    </location>
</feature>
<feature type="helix" evidence="13">
    <location>
        <begin position="475"/>
        <end position="484"/>
    </location>
</feature>
<feature type="helix" evidence="13">
    <location>
        <begin position="490"/>
        <end position="492"/>
    </location>
</feature>
<feature type="strand" evidence="13">
    <location>
        <begin position="495"/>
        <end position="500"/>
    </location>
</feature>
<feature type="helix" evidence="13">
    <location>
        <begin position="510"/>
        <end position="516"/>
    </location>
</feature>
<name>PNKP_MOUSE</name>
<organism>
    <name type="scientific">Mus musculus</name>
    <name type="common">Mouse</name>
    <dbReference type="NCBI Taxonomy" id="10090"/>
    <lineage>
        <taxon>Eukaryota</taxon>
        <taxon>Metazoa</taxon>
        <taxon>Chordata</taxon>
        <taxon>Craniata</taxon>
        <taxon>Vertebrata</taxon>
        <taxon>Euteleostomi</taxon>
        <taxon>Mammalia</taxon>
        <taxon>Eutheria</taxon>
        <taxon>Euarchontoglires</taxon>
        <taxon>Glires</taxon>
        <taxon>Rodentia</taxon>
        <taxon>Myomorpha</taxon>
        <taxon>Muroidea</taxon>
        <taxon>Muridae</taxon>
        <taxon>Murinae</taxon>
        <taxon>Mus</taxon>
        <taxon>Mus</taxon>
    </lineage>
</organism>
<protein>
    <recommendedName>
        <fullName>Bifunctional polynucleotide phosphatase/kinase</fullName>
    </recommendedName>
    <alternativeName>
        <fullName>DNA 5'-kinase/3'-phosphatase</fullName>
    </alternativeName>
    <alternativeName>
        <fullName>Polynucleotide kinase-3'-phosphatase</fullName>
    </alternativeName>
    <domain>
        <recommendedName>
            <fullName>Polynucleotide 3'-phosphatase</fullName>
            <ecNumber>3.1.3.32</ecNumber>
        </recommendedName>
        <alternativeName>
            <fullName>2'(3')-polynucleotidase</fullName>
        </alternativeName>
    </domain>
    <domain>
        <recommendedName>
            <fullName>Polynucleotide 5'-hydroxyl-kinase</fullName>
            <ecNumber>2.7.1.78</ecNumber>
        </recommendedName>
    </domain>
</protein>
<evidence type="ECO:0000250" key="1">
    <source>
        <dbReference type="UniProtKB" id="Q96T60"/>
    </source>
</evidence>
<evidence type="ECO:0000255" key="2"/>
<evidence type="ECO:0000256" key="3">
    <source>
        <dbReference type="SAM" id="MobiDB-lite"/>
    </source>
</evidence>
<evidence type="ECO:0000269" key="4">
    <source>
    </source>
</evidence>
<evidence type="ECO:0000303" key="5">
    <source>
    </source>
</evidence>
<evidence type="ECO:0000303" key="6">
    <source ref="1"/>
</evidence>
<evidence type="ECO:0000305" key="7"/>
<evidence type="ECO:0007744" key="8">
    <source>
    </source>
</evidence>
<evidence type="ECO:0007829" key="9">
    <source>
        <dbReference type="PDB" id="1UJX"/>
    </source>
</evidence>
<evidence type="ECO:0007829" key="10">
    <source>
        <dbReference type="PDB" id="1YJ5"/>
    </source>
</evidence>
<evidence type="ECO:0007829" key="11">
    <source>
        <dbReference type="PDB" id="1YJM"/>
    </source>
</evidence>
<evidence type="ECO:0007829" key="12">
    <source>
        <dbReference type="PDB" id="3U7E"/>
    </source>
</evidence>
<evidence type="ECO:0007829" key="13">
    <source>
        <dbReference type="PDB" id="3ZVL"/>
    </source>
</evidence>
<evidence type="ECO:0007829" key="14">
    <source>
        <dbReference type="PDB" id="3ZVN"/>
    </source>
</evidence>
<reference key="1">
    <citation type="submission" date="1999-02" db="EMBL/GenBank/DDBJ databases">
        <authorList>
            <person name="Beaulieu N."/>
            <person name="Lasko D.D."/>
        </authorList>
    </citation>
    <scope>NUCLEOTIDE SEQUENCE [MRNA] (ISOFORM 2)</scope>
    <source>
        <strain>C57BL/6J</strain>
        <tissue>Spleen</tissue>
    </source>
</reference>
<reference key="2">
    <citation type="journal article" date="2004" name="Genome Res.">
        <title>The status, quality, and expansion of the NIH full-length cDNA project: the Mammalian Gene Collection (MGC).</title>
        <authorList>
            <consortium name="The MGC Project Team"/>
        </authorList>
    </citation>
    <scope>NUCLEOTIDE SEQUENCE [LARGE SCALE MRNA] (ISOFORM 1)</scope>
    <source>
        <strain>C57BL/6J</strain>
        <tissue>Mammary tumor</tissue>
    </source>
</reference>
<reference key="3">
    <citation type="journal article" date="2007" name="Science">
        <title>ATM and ATR substrate analysis reveals extensive protein networks responsive to DNA damage.</title>
        <authorList>
            <person name="Matsuoka S."/>
            <person name="Ballif B.A."/>
            <person name="Smogorzewska A."/>
            <person name="McDonald E.R. III"/>
            <person name="Hurov K.E."/>
            <person name="Luo J."/>
            <person name="Bakalarski C.E."/>
            <person name="Zhao Z."/>
            <person name="Solimini N."/>
            <person name="Lerenthal Y."/>
            <person name="Shiloh Y."/>
            <person name="Gygi S.P."/>
            <person name="Elledge S.J."/>
        </authorList>
    </citation>
    <scope>PHOSPHORYLATION [LARGE SCALE ANALYSIS] AT THR-122</scope>
    <scope>IDENTIFICATION BY MASS SPECTROMETRY [LARGE SCALE ANALYSIS]</scope>
    <source>
        <tissue>Embryonic fibroblast</tissue>
    </source>
</reference>
<reference key="4">
    <citation type="journal article" date="2010" name="Cell">
        <title>A tissue-specific atlas of mouse protein phosphorylation and expression.</title>
        <authorList>
            <person name="Huttlin E.L."/>
            <person name="Jedrychowski M.P."/>
            <person name="Elias J.E."/>
            <person name="Goswami T."/>
            <person name="Rad R."/>
            <person name="Beausoleil S.A."/>
            <person name="Villen J."/>
            <person name="Haas W."/>
            <person name="Sowa M.E."/>
            <person name="Gygi S.P."/>
        </authorList>
    </citation>
    <scope>IDENTIFICATION BY MASS SPECTROMETRY [LARGE SCALE ANALYSIS]</scope>
    <source>
        <tissue>Kidney</tissue>
        <tissue>Lung</tissue>
        <tissue>Spleen</tissue>
        <tissue>Testis</tissue>
    </source>
</reference>
<reference key="5">
    <citation type="submission" date="2004-02" db="PDB data bank">
        <title>The forkhead-associated (FHA) domain-like structure from mouse polynucleotide kinase 3'-phosphatase.</title>
        <authorList>
            <consortium name="RIKEN structural genomics initiative (RSGI)"/>
        </authorList>
    </citation>
    <scope>STRUCTURE BY NMR OF 1-106</scope>
</reference>
<reference key="6">
    <citation type="journal article" date="2005" name="Mol. Cell">
        <title>The molecular architecture of the mammalian DNA repair enzyme, polynucleotide kinase.</title>
        <authorList>
            <person name="Bernstein N.K."/>
            <person name="Williams R.S."/>
            <person name="Rakovszky M.L."/>
            <person name="Cui D."/>
            <person name="Green R."/>
            <person name="Karimi-Busheri F."/>
            <person name="Mani R.S."/>
            <person name="Galicia S."/>
            <person name="Koch C.A."/>
            <person name="Cass C.E."/>
            <person name="Durocher D."/>
            <person name="Weinfeld M."/>
            <person name="Glover J.N."/>
        </authorList>
    </citation>
    <scope>X-RAY CRYSTALLOGRAPHY (2.8 ANGSTROMS)</scope>
    <scope>DOMAIN ARCHITECTURE</scope>
    <scope>MUTAGENESIS OF ARG-44; LYS-45 AND ARG-48</scope>
    <scope>FHA DOMAIN</scope>
    <scope>SUBUNIT</scope>
</reference>
<dbReference type="EC" id="3.1.3.32"/>
<dbReference type="EC" id="2.7.1.78"/>
<dbReference type="EMBL" id="AF129451">
    <property type="protein sequence ID" value="AAF36487.1"/>
    <property type="molecule type" value="mRNA"/>
</dbReference>
<dbReference type="EMBL" id="BC057659">
    <property type="protein sequence ID" value="AAH57659.1"/>
    <property type="molecule type" value="mRNA"/>
</dbReference>
<dbReference type="CCDS" id="CCDS39945.1">
    <molecule id="Q9JLV6-1"/>
</dbReference>
<dbReference type="PDB" id="1UJX">
    <property type="method" value="NMR"/>
    <property type="chains" value="A=1-106"/>
</dbReference>
<dbReference type="PDB" id="1YJ5">
    <property type="method" value="X-ray"/>
    <property type="resolution" value="2.80 A"/>
    <property type="chains" value="A/B=140-522, C=1-143"/>
</dbReference>
<dbReference type="PDB" id="1YJM">
    <property type="method" value="X-ray"/>
    <property type="resolution" value="2.20 A"/>
    <property type="chains" value="A/B/C=1-110"/>
</dbReference>
<dbReference type="PDB" id="3U7E">
    <property type="method" value="X-ray"/>
    <property type="resolution" value="1.70 A"/>
    <property type="chains" value="B=142-522"/>
</dbReference>
<dbReference type="PDB" id="3U7F">
    <property type="method" value="X-ray"/>
    <property type="resolution" value="1.80 A"/>
    <property type="chains" value="B=142-522"/>
</dbReference>
<dbReference type="PDB" id="3U7G">
    <property type="method" value="X-ray"/>
    <property type="resolution" value="2.10 A"/>
    <property type="chains" value="A=144-522"/>
</dbReference>
<dbReference type="PDB" id="3U7H">
    <property type="method" value="X-ray"/>
    <property type="resolution" value="2.00 A"/>
    <property type="chains" value="B=142-522"/>
</dbReference>
<dbReference type="PDB" id="3ZVL">
    <property type="method" value="X-ray"/>
    <property type="resolution" value="1.65 A"/>
    <property type="chains" value="A=111-522"/>
</dbReference>
<dbReference type="PDB" id="3ZVM">
    <property type="method" value="X-ray"/>
    <property type="resolution" value="2.00 A"/>
    <property type="chains" value="A/B=111-522"/>
</dbReference>
<dbReference type="PDB" id="3ZVN">
    <property type="method" value="X-ray"/>
    <property type="resolution" value="2.15 A"/>
    <property type="chains" value="A=111-522"/>
</dbReference>
<dbReference type="PDBsum" id="1UJX"/>
<dbReference type="PDBsum" id="1YJ5"/>
<dbReference type="PDBsum" id="1YJM"/>
<dbReference type="PDBsum" id="3U7E"/>
<dbReference type="PDBsum" id="3U7F"/>
<dbReference type="PDBsum" id="3U7G"/>
<dbReference type="PDBsum" id="3U7H"/>
<dbReference type="PDBsum" id="3ZVL"/>
<dbReference type="PDBsum" id="3ZVM"/>
<dbReference type="PDBsum" id="3ZVN"/>
<dbReference type="BMRB" id="Q9JLV6"/>
<dbReference type="SMR" id="Q9JLV6"/>
<dbReference type="FunCoup" id="Q9JLV6">
    <property type="interactions" value="1564"/>
</dbReference>
<dbReference type="IntAct" id="Q9JLV6">
    <property type="interactions" value="1"/>
</dbReference>
<dbReference type="STRING" id="10090.ENSMUSP00000003044"/>
<dbReference type="ChEMBL" id="CHEMBL4523466"/>
<dbReference type="iPTMnet" id="Q9JLV6"/>
<dbReference type="PhosphoSitePlus" id="Q9JLV6"/>
<dbReference type="jPOST" id="Q9JLV6"/>
<dbReference type="PaxDb" id="10090-ENSMUSP00000003044"/>
<dbReference type="PeptideAtlas" id="Q9JLV6"/>
<dbReference type="ProteomicsDB" id="289709">
    <molecule id="Q9JLV6-1"/>
</dbReference>
<dbReference type="ProteomicsDB" id="289710">
    <molecule id="Q9JLV6-2"/>
</dbReference>
<dbReference type="Pumba" id="Q9JLV6"/>
<dbReference type="UCSC" id="uc012fjx.1">
    <molecule id="Q9JLV6-1"/>
    <property type="organism name" value="mouse"/>
</dbReference>
<dbReference type="AGR" id="MGI:1891698"/>
<dbReference type="MGI" id="MGI:1891698">
    <property type="gene designation" value="Pnkp"/>
</dbReference>
<dbReference type="eggNOG" id="KOG2134">
    <property type="taxonomic scope" value="Eukaryota"/>
</dbReference>
<dbReference type="InParanoid" id="Q9JLV6"/>
<dbReference type="PhylomeDB" id="Q9JLV6"/>
<dbReference type="BRENDA" id="2.7.1.78">
    <property type="organism ID" value="3474"/>
</dbReference>
<dbReference type="BRENDA" id="3.1.3.32">
    <property type="organism ID" value="3474"/>
</dbReference>
<dbReference type="Reactome" id="R-MMU-5649702">
    <property type="pathway name" value="APEX1-Independent Resolution of AP Sites via the Single Nucleotide Replacement Pathway"/>
</dbReference>
<dbReference type="EvolutionaryTrace" id="Q9JLV6"/>
<dbReference type="PRO" id="PR:Q9JLV6"/>
<dbReference type="Proteomes" id="UP000000589">
    <property type="component" value="Unplaced"/>
</dbReference>
<dbReference type="RNAct" id="Q9JLV6">
    <property type="molecule type" value="protein"/>
</dbReference>
<dbReference type="GO" id="GO:0005634">
    <property type="term" value="C:nucleus"/>
    <property type="evidence" value="ECO:0007669"/>
    <property type="project" value="UniProtKB-SubCell"/>
</dbReference>
<dbReference type="GO" id="GO:0019005">
    <property type="term" value="C:SCF ubiquitin ligase complex"/>
    <property type="evidence" value="ECO:0000314"/>
    <property type="project" value="UniProtKB"/>
</dbReference>
<dbReference type="GO" id="GO:0035861">
    <property type="term" value="C:site of double-strand break"/>
    <property type="evidence" value="ECO:0000314"/>
    <property type="project" value="UniProtKB"/>
</dbReference>
<dbReference type="GO" id="GO:0005524">
    <property type="term" value="F:ATP binding"/>
    <property type="evidence" value="ECO:0007669"/>
    <property type="project" value="UniProtKB-KW"/>
</dbReference>
<dbReference type="GO" id="GO:0046404">
    <property type="term" value="F:ATP-dependent polydeoxyribonucleotide 5'-hydroxyl-kinase activity"/>
    <property type="evidence" value="ECO:0007669"/>
    <property type="project" value="InterPro"/>
</dbReference>
<dbReference type="GO" id="GO:0046403">
    <property type="term" value="F:polynucleotide 3'-phosphatase activity"/>
    <property type="evidence" value="ECO:0007669"/>
    <property type="project" value="UniProtKB-EC"/>
</dbReference>
<dbReference type="GO" id="GO:1990756">
    <property type="term" value="F:ubiquitin-like ligase-substrate adaptor activity"/>
    <property type="evidence" value="ECO:0000314"/>
    <property type="project" value="UniProtKB"/>
</dbReference>
<dbReference type="GO" id="GO:0006974">
    <property type="term" value="P:DNA damage response"/>
    <property type="evidence" value="ECO:0000314"/>
    <property type="project" value="UniProtKB"/>
</dbReference>
<dbReference type="GO" id="GO:0006303">
    <property type="term" value="P:double-strand break repair via nonhomologous end joining"/>
    <property type="evidence" value="ECO:0000250"/>
    <property type="project" value="UniProtKB"/>
</dbReference>
<dbReference type="GO" id="GO:0070534">
    <property type="term" value="P:protein K63-linked ubiquitination"/>
    <property type="evidence" value="ECO:0000314"/>
    <property type="project" value="UniProtKB"/>
</dbReference>
<dbReference type="CDD" id="cd22736">
    <property type="entry name" value="FHA_PNKP"/>
    <property type="match status" value="1"/>
</dbReference>
<dbReference type="CDD" id="cd01625">
    <property type="entry name" value="HAD_PNP"/>
    <property type="match status" value="1"/>
</dbReference>
<dbReference type="FunFam" id="3.40.50.1000:FF:000078">
    <property type="entry name" value="Bifunctional polynucleotide phosphatase/kinase"/>
    <property type="match status" value="1"/>
</dbReference>
<dbReference type="FunFam" id="3.40.50.300:FF:000737">
    <property type="entry name" value="Bifunctional polynucleotide phosphatase/kinase"/>
    <property type="match status" value="1"/>
</dbReference>
<dbReference type="FunFam" id="2.60.200.20:FF:000009">
    <property type="entry name" value="bifunctional polynucleotide phosphatase/kinase"/>
    <property type="match status" value="1"/>
</dbReference>
<dbReference type="Gene3D" id="2.60.200.20">
    <property type="match status" value="1"/>
</dbReference>
<dbReference type="Gene3D" id="3.40.50.1000">
    <property type="entry name" value="HAD superfamily/HAD-like"/>
    <property type="match status" value="1"/>
</dbReference>
<dbReference type="Gene3D" id="3.40.50.300">
    <property type="entry name" value="P-loop containing nucleotide triphosphate hydrolases"/>
    <property type="match status" value="1"/>
</dbReference>
<dbReference type="InterPro" id="IPR041388">
    <property type="entry name" value="FHA_2"/>
</dbReference>
<dbReference type="InterPro" id="IPR036412">
    <property type="entry name" value="HAD-like_sf"/>
</dbReference>
<dbReference type="InterPro" id="IPR006549">
    <property type="entry name" value="HAD-SF_hydro_IIIA"/>
</dbReference>
<dbReference type="InterPro" id="IPR023214">
    <property type="entry name" value="HAD_sf"/>
</dbReference>
<dbReference type="InterPro" id="IPR027417">
    <property type="entry name" value="P-loop_NTPase"/>
</dbReference>
<dbReference type="InterPro" id="IPR013954">
    <property type="entry name" value="PNK3P"/>
</dbReference>
<dbReference type="InterPro" id="IPR006550">
    <property type="entry name" value="PNKP"/>
</dbReference>
<dbReference type="InterPro" id="IPR006551">
    <property type="entry name" value="Polynucleotide_phosphatase"/>
</dbReference>
<dbReference type="InterPro" id="IPR008984">
    <property type="entry name" value="SMAD_FHA_dom_sf"/>
</dbReference>
<dbReference type="NCBIfam" id="TIGR01664">
    <property type="entry name" value="DNA-3'-Pase"/>
    <property type="match status" value="1"/>
</dbReference>
<dbReference type="NCBIfam" id="TIGR01662">
    <property type="entry name" value="HAD-SF-IIIA"/>
    <property type="match status" value="1"/>
</dbReference>
<dbReference type="NCBIfam" id="TIGR01663">
    <property type="entry name" value="PNK-3'Pase"/>
    <property type="match status" value="1"/>
</dbReference>
<dbReference type="PANTHER" id="PTHR12083">
    <property type="entry name" value="BIFUNCTIONAL POLYNUCLEOTIDE PHOSPHATASE/KINASE"/>
    <property type="match status" value="1"/>
</dbReference>
<dbReference type="PANTHER" id="PTHR12083:SF9">
    <property type="entry name" value="BIFUNCTIONAL POLYNUCLEOTIDE PHOSPHATASE_KINASE"/>
    <property type="match status" value="1"/>
</dbReference>
<dbReference type="Pfam" id="PF13671">
    <property type="entry name" value="AAA_33"/>
    <property type="match status" value="1"/>
</dbReference>
<dbReference type="Pfam" id="PF17913">
    <property type="entry name" value="FHA_2"/>
    <property type="match status" value="1"/>
</dbReference>
<dbReference type="Pfam" id="PF08645">
    <property type="entry name" value="PNK3P"/>
    <property type="match status" value="1"/>
</dbReference>
<dbReference type="SUPFAM" id="SSF56784">
    <property type="entry name" value="HAD-like"/>
    <property type="match status" value="1"/>
</dbReference>
<dbReference type="SUPFAM" id="SSF52540">
    <property type="entry name" value="P-loop containing nucleoside triphosphate hydrolases"/>
    <property type="match status" value="1"/>
</dbReference>
<dbReference type="SUPFAM" id="SSF49879">
    <property type="entry name" value="SMAD/FHA domain"/>
    <property type="match status" value="1"/>
</dbReference>
<gene>
    <name type="primary">Pnkp</name>
</gene>
<accession>Q9JLV6</accession>
<accession>Q6PFA3</accession>
<keyword id="KW-0002">3D-structure</keyword>
<keyword id="KW-0007">Acetylation</keyword>
<keyword id="KW-0025">Alternative splicing</keyword>
<keyword id="KW-0067">ATP-binding</keyword>
<keyword id="KW-0227">DNA damage</keyword>
<keyword id="KW-0234">DNA repair</keyword>
<keyword id="KW-0378">Hydrolase</keyword>
<keyword id="KW-0418">Kinase</keyword>
<keyword id="KW-0511">Multifunctional enzyme</keyword>
<keyword id="KW-0547">Nucleotide-binding</keyword>
<keyword id="KW-0539">Nucleus</keyword>
<keyword id="KW-0597">Phosphoprotein</keyword>
<keyword id="KW-1185">Reference proteome</keyword>
<keyword id="KW-0808">Transferase</keyword>
<comment type="function">
    <text evidence="1">Plays a key role in the repair of DNA damage, functioning as part of both the non-homologous end-joining (NHEJ) and base excision repair (BER) pathways. Through its two catalytic activities, PNK ensures that DNA termini are compatible with extension and ligation by either removing 3'-phosphates from, or by phosphorylating 5'-hydroxyl groups on, the ribose sugar of the DNA backbone.</text>
</comment>
<comment type="catalytic activity">
    <reaction evidence="1">
        <text>a 3'end (2'-deoxyribonucleotide 3'-phosphate)-DNA + H2O = a 3'-end 2'-deoxyribonucleotide-DNA + phosphate</text>
        <dbReference type="Rhea" id="RHEA:14113"/>
        <dbReference type="Rhea" id="RHEA-COMP:13863"/>
        <dbReference type="Rhea" id="RHEA-COMP:13864"/>
        <dbReference type="ChEBI" id="CHEBI:15377"/>
        <dbReference type="ChEBI" id="CHEBI:43474"/>
        <dbReference type="ChEBI" id="CHEBI:138147"/>
        <dbReference type="ChEBI" id="CHEBI:138148"/>
        <dbReference type="EC" id="3.1.3.32"/>
    </reaction>
</comment>
<comment type="catalytic activity">
    <reaction evidence="1">
        <text>a 5'-end dephospho-2'-deoxyribonucleoside-DNA + ATP = a 5'-end 5'-phospho-2'-deoxyribonucleoside-DNA + ADP + H(+)</text>
        <dbReference type="Rhea" id="RHEA:15669"/>
        <dbReference type="Rhea" id="RHEA-COMP:13180"/>
        <dbReference type="Rhea" id="RHEA-COMP:13184"/>
        <dbReference type="ChEBI" id="CHEBI:15378"/>
        <dbReference type="ChEBI" id="CHEBI:30616"/>
        <dbReference type="ChEBI" id="CHEBI:136412"/>
        <dbReference type="ChEBI" id="CHEBI:136416"/>
        <dbReference type="ChEBI" id="CHEBI:456216"/>
        <dbReference type="EC" id="2.7.1.78"/>
    </reaction>
</comment>
<comment type="subunit">
    <text evidence="1 4">Monomer (PubMed:15749016). Interacts (via FHA domain) with XRCC4; mainly interacts with XRCC4 phosphorylated by CK2 but is also able to interact at much lower level with unphosphorylated PNKP (By similarity).</text>
</comment>
<comment type="subcellular location">
    <subcellularLocation>
        <location evidence="1">Nucleus</location>
    </subcellularLocation>
</comment>
<comment type="alternative products">
    <event type="alternative splicing"/>
    <isoform>
        <id>Q9JLV6-1</id>
        <name>1</name>
        <sequence type="displayed"/>
    </isoform>
    <isoform>
        <id>Q9JLV6-2</id>
        <name>2</name>
        <sequence type="described" ref="VSP_010771"/>
    </isoform>
</comment>
<comment type="domain">
    <text evidence="4">The FHA domain binds threonine-phosphorylated peptides from XRCC1/4, and is responsible for the recruitment of PNKP to the sites of DNA repair. The affinity is ten times greater if peptides are also phosphorylated on the serine preceeding the phosphothreonine.</text>
</comment>
<comment type="similarity">
    <text evidence="7">In the N-terminal section; belongs to the DNA 3' phosphatase family.</text>
</comment>
<proteinExistence type="evidence at protein level"/>